<feature type="chain" id="PRO_1000052357" description="Large ribosomal subunit protein uL4">
    <location>
        <begin position="1"/>
        <end position="201"/>
    </location>
</feature>
<feature type="region of interest" description="Disordered" evidence="2">
    <location>
        <begin position="45"/>
        <end position="66"/>
    </location>
</feature>
<proteinExistence type="inferred from homology"/>
<reference key="1">
    <citation type="journal article" date="2006" name="PLoS Biol.">
        <title>Metabolic complementarity and genomics of the dual bacterial symbiosis of sharpshooters.</title>
        <authorList>
            <person name="Wu D."/>
            <person name="Daugherty S.C."/>
            <person name="Van Aken S.E."/>
            <person name="Pai G.H."/>
            <person name="Watkins K.L."/>
            <person name="Khouri H."/>
            <person name="Tallon L.J."/>
            <person name="Zaborsky J.M."/>
            <person name="Dunbar H.E."/>
            <person name="Tran P.L."/>
            <person name="Moran N.A."/>
            <person name="Eisen J.A."/>
        </authorList>
    </citation>
    <scope>NUCLEOTIDE SEQUENCE [LARGE SCALE GENOMIC DNA]</scope>
</reference>
<accession>Q1LTD7</accession>
<evidence type="ECO:0000255" key="1">
    <source>
        <dbReference type="HAMAP-Rule" id="MF_01328"/>
    </source>
</evidence>
<evidence type="ECO:0000256" key="2">
    <source>
        <dbReference type="SAM" id="MobiDB-lite"/>
    </source>
</evidence>
<evidence type="ECO:0000305" key="3"/>
<comment type="function">
    <text evidence="1">One of the primary rRNA binding proteins, this protein initially binds near the 5'-end of the 23S rRNA. It is important during the early stages of 50S assembly. It makes multiple contacts with different domains of the 23S rRNA in the assembled 50S subunit and ribosome.</text>
</comment>
<comment type="function">
    <text evidence="1">Forms part of the polypeptide exit tunnel.</text>
</comment>
<comment type="subunit">
    <text evidence="1">Part of the 50S ribosomal subunit.</text>
</comment>
<comment type="similarity">
    <text evidence="1">Belongs to the universal ribosomal protein uL4 family.</text>
</comment>
<dbReference type="EMBL" id="CP000238">
    <property type="protein sequence ID" value="ABF14033.1"/>
    <property type="molecule type" value="Genomic_DNA"/>
</dbReference>
<dbReference type="RefSeq" id="WP_011520510.1">
    <property type="nucleotide sequence ID" value="NC_007984.1"/>
</dbReference>
<dbReference type="SMR" id="Q1LTD7"/>
<dbReference type="STRING" id="374463.BCI_0329"/>
<dbReference type="KEGG" id="bci:BCI_0329"/>
<dbReference type="HOGENOM" id="CLU_041575_5_2_6"/>
<dbReference type="OrthoDB" id="9803201at2"/>
<dbReference type="Proteomes" id="UP000002427">
    <property type="component" value="Chromosome"/>
</dbReference>
<dbReference type="GO" id="GO:1990904">
    <property type="term" value="C:ribonucleoprotein complex"/>
    <property type="evidence" value="ECO:0007669"/>
    <property type="project" value="UniProtKB-KW"/>
</dbReference>
<dbReference type="GO" id="GO:0005840">
    <property type="term" value="C:ribosome"/>
    <property type="evidence" value="ECO:0007669"/>
    <property type="project" value="UniProtKB-KW"/>
</dbReference>
<dbReference type="GO" id="GO:0019843">
    <property type="term" value="F:rRNA binding"/>
    <property type="evidence" value="ECO:0007669"/>
    <property type="project" value="UniProtKB-UniRule"/>
</dbReference>
<dbReference type="GO" id="GO:0003735">
    <property type="term" value="F:structural constituent of ribosome"/>
    <property type="evidence" value="ECO:0007669"/>
    <property type="project" value="InterPro"/>
</dbReference>
<dbReference type="GO" id="GO:0006412">
    <property type="term" value="P:translation"/>
    <property type="evidence" value="ECO:0007669"/>
    <property type="project" value="UniProtKB-UniRule"/>
</dbReference>
<dbReference type="Gene3D" id="3.40.1370.10">
    <property type="match status" value="1"/>
</dbReference>
<dbReference type="HAMAP" id="MF_01328_B">
    <property type="entry name" value="Ribosomal_uL4_B"/>
    <property type="match status" value="1"/>
</dbReference>
<dbReference type="InterPro" id="IPR002136">
    <property type="entry name" value="Ribosomal_uL4"/>
</dbReference>
<dbReference type="InterPro" id="IPR013005">
    <property type="entry name" value="Ribosomal_uL4-like"/>
</dbReference>
<dbReference type="InterPro" id="IPR023574">
    <property type="entry name" value="Ribosomal_uL4_dom_sf"/>
</dbReference>
<dbReference type="NCBIfam" id="TIGR03953">
    <property type="entry name" value="rplD_bact"/>
    <property type="match status" value="1"/>
</dbReference>
<dbReference type="PANTHER" id="PTHR10746">
    <property type="entry name" value="50S RIBOSOMAL PROTEIN L4"/>
    <property type="match status" value="1"/>
</dbReference>
<dbReference type="PANTHER" id="PTHR10746:SF6">
    <property type="entry name" value="LARGE RIBOSOMAL SUBUNIT PROTEIN UL4M"/>
    <property type="match status" value="1"/>
</dbReference>
<dbReference type="Pfam" id="PF00573">
    <property type="entry name" value="Ribosomal_L4"/>
    <property type="match status" value="1"/>
</dbReference>
<dbReference type="SUPFAM" id="SSF52166">
    <property type="entry name" value="Ribosomal protein L4"/>
    <property type="match status" value="1"/>
</dbReference>
<name>RL4_BAUCH</name>
<keyword id="KW-1185">Reference proteome</keyword>
<keyword id="KW-0687">Ribonucleoprotein</keyword>
<keyword id="KW-0689">Ribosomal protein</keyword>
<keyword id="KW-0694">RNA-binding</keyword>
<keyword id="KW-0699">rRNA-binding</keyword>
<organism>
    <name type="scientific">Baumannia cicadellinicola subsp. Homalodisca coagulata</name>
    <dbReference type="NCBI Taxonomy" id="374463"/>
    <lineage>
        <taxon>Bacteria</taxon>
        <taxon>Pseudomonadati</taxon>
        <taxon>Pseudomonadota</taxon>
        <taxon>Gammaproteobacteria</taxon>
        <taxon>Candidatus Palibaumannia</taxon>
    </lineage>
</organism>
<protein>
    <recommendedName>
        <fullName evidence="1">Large ribosomal subunit protein uL4</fullName>
    </recommendedName>
    <alternativeName>
        <fullName evidence="3">50S ribosomal protein L4</fullName>
    </alternativeName>
</protein>
<sequence>MELVLQDTQKSLTVSNNIFGYRFNEALIHQVIVAYAAHTRSGNHAQKSRAEVVGSNKKPWRQKGTGRARAGTVKSPLWRSGGVTFAAKPRDYSQKINKKMYRGALKSIFSELIRQKRLIVVEQFCIQAPKTKLLVDKLKKITLKKVLIITHLLELNLLLAARNLYTVEICDIANINLISLVTFDQVIITANSIKQIEERLI</sequence>
<gene>
    <name evidence="1" type="primary">rplD</name>
    <name type="ordered locus">BCI_0329</name>
</gene>